<sequence length="319" mass="34982">MTQLDQLKQFTTVVADTGDFQAMRAYAPHDATTNPSLILKAVQKAEYRPLLEQAVRDARSDSVEDIIDAVLVAFGCEILSIIPGRVSTEVDARLSFDTEATVAKAKHLIALYEARGVARERVLIKIASTWEGIRAADQLRAEGIRCNMTLLFSLAQAVACAEAGVQLISPFVGRIYDWYKKDAGANWDPIAQGGPNDPGVQSVLRIYNYYKKFDYPTEVMGASFRNISQIVELAGCDLLTISPDLLAQLQQSDAPVERKLSPDNANAANIVRLPADEKSFRWHMNADAMATEKLAEGIRLFAADAIKLEALIEPLRAAA</sequence>
<name>TAL_RALPJ</name>
<organism>
    <name type="scientific">Ralstonia pickettii (strain 12J)</name>
    <dbReference type="NCBI Taxonomy" id="402626"/>
    <lineage>
        <taxon>Bacteria</taxon>
        <taxon>Pseudomonadati</taxon>
        <taxon>Pseudomonadota</taxon>
        <taxon>Betaproteobacteria</taxon>
        <taxon>Burkholderiales</taxon>
        <taxon>Burkholderiaceae</taxon>
        <taxon>Ralstonia</taxon>
    </lineage>
</organism>
<feature type="chain" id="PRO_1000126253" description="Transaldolase">
    <location>
        <begin position="1"/>
        <end position="319"/>
    </location>
</feature>
<feature type="active site" description="Schiff-base intermediate with substrate" evidence="2">
    <location>
        <position position="125"/>
    </location>
</feature>
<protein>
    <recommendedName>
        <fullName evidence="2">Transaldolase</fullName>
        <ecNumber evidence="2">2.2.1.2</ecNumber>
    </recommendedName>
</protein>
<dbReference type="EC" id="2.2.1.2" evidence="2"/>
<dbReference type="EMBL" id="CP001068">
    <property type="protein sequence ID" value="ACD26223.1"/>
    <property type="molecule type" value="Genomic_DNA"/>
</dbReference>
<dbReference type="SMR" id="B2U9W5"/>
<dbReference type="STRING" id="402626.Rpic_1075"/>
<dbReference type="KEGG" id="rpi:Rpic_1075"/>
<dbReference type="eggNOG" id="COG0176">
    <property type="taxonomic scope" value="Bacteria"/>
</dbReference>
<dbReference type="HOGENOM" id="CLU_047470_0_1_4"/>
<dbReference type="UniPathway" id="UPA00115">
    <property type="reaction ID" value="UER00414"/>
</dbReference>
<dbReference type="GO" id="GO:0005737">
    <property type="term" value="C:cytoplasm"/>
    <property type="evidence" value="ECO:0007669"/>
    <property type="project" value="UniProtKB-SubCell"/>
</dbReference>
<dbReference type="GO" id="GO:0004801">
    <property type="term" value="F:transaldolase activity"/>
    <property type="evidence" value="ECO:0000250"/>
    <property type="project" value="UniProtKB"/>
</dbReference>
<dbReference type="GO" id="GO:0005975">
    <property type="term" value="P:carbohydrate metabolic process"/>
    <property type="evidence" value="ECO:0007669"/>
    <property type="project" value="InterPro"/>
</dbReference>
<dbReference type="GO" id="GO:0006098">
    <property type="term" value="P:pentose-phosphate shunt"/>
    <property type="evidence" value="ECO:0007669"/>
    <property type="project" value="UniProtKB-UniRule"/>
</dbReference>
<dbReference type="CDD" id="cd00957">
    <property type="entry name" value="Transaldolase_TalAB"/>
    <property type="match status" value="1"/>
</dbReference>
<dbReference type="FunFam" id="3.20.20.70:FF:000002">
    <property type="entry name" value="Transaldolase"/>
    <property type="match status" value="1"/>
</dbReference>
<dbReference type="Gene3D" id="3.20.20.70">
    <property type="entry name" value="Aldolase class I"/>
    <property type="match status" value="1"/>
</dbReference>
<dbReference type="HAMAP" id="MF_00492">
    <property type="entry name" value="Transaldolase_1"/>
    <property type="match status" value="1"/>
</dbReference>
<dbReference type="InterPro" id="IPR013785">
    <property type="entry name" value="Aldolase_TIM"/>
</dbReference>
<dbReference type="InterPro" id="IPR001585">
    <property type="entry name" value="TAL/FSA"/>
</dbReference>
<dbReference type="InterPro" id="IPR004730">
    <property type="entry name" value="Transaldolase_1"/>
</dbReference>
<dbReference type="InterPro" id="IPR018225">
    <property type="entry name" value="Transaldolase_AS"/>
</dbReference>
<dbReference type="NCBIfam" id="NF009001">
    <property type="entry name" value="PRK12346.1"/>
    <property type="match status" value="1"/>
</dbReference>
<dbReference type="NCBIfam" id="TIGR00874">
    <property type="entry name" value="talAB"/>
    <property type="match status" value="1"/>
</dbReference>
<dbReference type="PANTHER" id="PTHR10683">
    <property type="entry name" value="TRANSALDOLASE"/>
    <property type="match status" value="1"/>
</dbReference>
<dbReference type="PANTHER" id="PTHR10683:SF18">
    <property type="entry name" value="TRANSALDOLASE"/>
    <property type="match status" value="1"/>
</dbReference>
<dbReference type="Pfam" id="PF00923">
    <property type="entry name" value="TAL_FSA"/>
    <property type="match status" value="1"/>
</dbReference>
<dbReference type="SUPFAM" id="SSF51569">
    <property type="entry name" value="Aldolase"/>
    <property type="match status" value="1"/>
</dbReference>
<dbReference type="PROSITE" id="PS01054">
    <property type="entry name" value="TRANSALDOLASE_1"/>
    <property type="match status" value="1"/>
</dbReference>
<gene>
    <name evidence="2" type="primary">tal</name>
    <name type="ordered locus">Rpic_1075</name>
</gene>
<reference key="1">
    <citation type="submission" date="2008-05" db="EMBL/GenBank/DDBJ databases">
        <title>Complete sequence of chromosome 1 of Ralstonia pickettii 12J.</title>
        <authorList>
            <person name="Lucas S."/>
            <person name="Copeland A."/>
            <person name="Lapidus A."/>
            <person name="Glavina del Rio T."/>
            <person name="Dalin E."/>
            <person name="Tice H."/>
            <person name="Bruce D."/>
            <person name="Goodwin L."/>
            <person name="Pitluck S."/>
            <person name="Meincke L."/>
            <person name="Brettin T."/>
            <person name="Detter J.C."/>
            <person name="Han C."/>
            <person name="Kuske C.R."/>
            <person name="Schmutz J."/>
            <person name="Larimer F."/>
            <person name="Land M."/>
            <person name="Hauser L."/>
            <person name="Kyrpides N."/>
            <person name="Mikhailova N."/>
            <person name="Marsh T."/>
            <person name="Richardson P."/>
        </authorList>
    </citation>
    <scope>NUCLEOTIDE SEQUENCE [LARGE SCALE GENOMIC DNA]</scope>
    <source>
        <strain>12J</strain>
    </source>
</reference>
<evidence type="ECO:0000250" key="1"/>
<evidence type="ECO:0000255" key="2">
    <source>
        <dbReference type="HAMAP-Rule" id="MF_00492"/>
    </source>
</evidence>
<accession>B2U9W5</accession>
<comment type="function">
    <text evidence="2">Transaldolase is important for the balance of metabolites in the pentose-phosphate pathway.</text>
</comment>
<comment type="catalytic activity">
    <reaction evidence="2">
        <text>D-sedoheptulose 7-phosphate + D-glyceraldehyde 3-phosphate = D-erythrose 4-phosphate + beta-D-fructose 6-phosphate</text>
        <dbReference type="Rhea" id="RHEA:17053"/>
        <dbReference type="ChEBI" id="CHEBI:16897"/>
        <dbReference type="ChEBI" id="CHEBI:57483"/>
        <dbReference type="ChEBI" id="CHEBI:57634"/>
        <dbReference type="ChEBI" id="CHEBI:59776"/>
        <dbReference type="EC" id="2.2.1.2"/>
    </reaction>
</comment>
<comment type="pathway">
    <text evidence="2">Carbohydrate degradation; pentose phosphate pathway; D-glyceraldehyde 3-phosphate and beta-D-fructose 6-phosphate from D-ribose 5-phosphate and D-xylulose 5-phosphate (non-oxidative stage): step 2/3.</text>
</comment>
<comment type="subunit">
    <text evidence="1">Homodimer.</text>
</comment>
<comment type="subcellular location">
    <subcellularLocation>
        <location evidence="2">Cytoplasm</location>
    </subcellularLocation>
</comment>
<comment type="similarity">
    <text evidence="2">Belongs to the transaldolase family. Type 1 subfamily.</text>
</comment>
<proteinExistence type="inferred from homology"/>
<keyword id="KW-0963">Cytoplasm</keyword>
<keyword id="KW-0570">Pentose shunt</keyword>
<keyword id="KW-0704">Schiff base</keyword>
<keyword id="KW-0808">Transferase</keyword>